<gene>
    <name type="primary">nhr-213</name>
    <name type="ORF">T06C12.13</name>
</gene>
<accession>O18048</accession>
<feature type="chain" id="PRO_0000223605" description="Nuclear hormone receptor family member nhr-213">
    <location>
        <begin position="1"/>
        <end position="414"/>
    </location>
</feature>
<feature type="domain" description="NR LBD" evidence="2">
    <location>
        <begin position="162"/>
        <end position="414"/>
    </location>
</feature>
<feature type="DNA-binding region" description="Nuclear receptor" evidence="1">
    <location>
        <begin position="21"/>
        <end position="99"/>
    </location>
</feature>
<feature type="zinc finger region" description="NR C4-type" evidence="1">
    <location>
        <begin position="24"/>
        <end position="44"/>
    </location>
</feature>
<feature type="zinc finger region" description="NR C4-type" evidence="1">
    <location>
        <begin position="62"/>
        <end position="82"/>
    </location>
</feature>
<proteinExistence type="inferred from homology"/>
<comment type="function">
    <text>Orphan nuclear receptor.</text>
</comment>
<comment type="subcellular location">
    <subcellularLocation>
        <location evidence="1">Nucleus</location>
    </subcellularLocation>
</comment>
<comment type="similarity">
    <text evidence="3">Belongs to the nuclear hormone receptor family.</text>
</comment>
<sequence length="414" mass="48018">MSSTPSTSDTSSESSTSPATIVLCKVCALSAHGSHFGVLACRACAAFFRRTVVLERQKQYKCKKGKNECPVDTAERYQCRLCRYNKCVDLGMTPENVQFNRESASRTRKRKNENSIAQTNSFKLIPRSDNAFLGKPRTIMDISSLSTKIKSVLNGKTYNLDSAAKKMNSLEAAEYALKKWRSQQKTEDKMEKVGELPVRQLFVIFEKQMVMIAEWLIHNPDFRMLDEEEKYLYFKAVWNMWRRFERFEMSVKMFGNQVLTKRKFAISNEKLMVMDSCIDYSEITDLPNSKVAEMFRLTRSKLFHQLAKPLMELNPSSIEMAYMLTQLSWQIAGKKMQGNVIEIGERVCDNLADDLHSYYQKNEKRSNYAGRLVRLMNIVNAMKKIHLQRKNTMELARIFEMFKVDFSDPDIFDC</sequence>
<keyword id="KW-0238">DNA-binding</keyword>
<keyword id="KW-0479">Metal-binding</keyword>
<keyword id="KW-0539">Nucleus</keyword>
<keyword id="KW-0675">Receptor</keyword>
<keyword id="KW-1185">Reference proteome</keyword>
<keyword id="KW-0804">Transcription</keyword>
<keyword id="KW-0805">Transcription regulation</keyword>
<keyword id="KW-0862">Zinc</keyword>
<keyword id="KW-0863">Zinc-finger</keyword>
<name>NH213_CAEEL</name>
<reference key="1">
    <citation type="journal article" date="1998" name="Science">
        <title>Genome sequence of the nematode C. elegans: a platform for investigating biology.</title>
        <authorList>
            <consortium name="The C. elegans sequencing consortium"/>
        </authorList>
    </citation>
    <scope>NUCLEOTIDE SEQUENCE [LARGE SCALE GENOMIC DNA]</scope>
    <source>
        <strain>Bristol N2</strain>
    </source>
</reference>
<protein>
    <recommendedName>
        <fullName>Nuclear hormone receptor family member nhr-213</fullName>
    </recommendedName>
</protein>
<dbReference type="EMBL" id="Z81116">
    <property type="protein sequence ID" value="CAB03309.1"/>
    <property type="molecule type" value="Genomic_DNA"/>
</dbReference>
<dbReference type="PIR" id="T24574">
    <property type="entry name" value="T24574"/>
</dbReference>
<dbReference type="RefSeq" id="NP_506974.1">
    <property type="nucleotide sequence ID" value="NM_074573.2"/>
</dbReference>
<dbReference type="SMR" id="O18048"/>
<dbReference type="BioGRID" id="52844">
    <property type="interactions" value="1"/>
</dbReference>
<dbReference type="DIP" id="DIP-24574N"/>
<dbReference type="FunCoup" id="O18048">
    <property type="interactions" value="83"/>
</dbReference>
<dbReference type="STRING" id="6239.T06C12.13a.1"/>
<dbReference type="PaxDb" id="6239-T06C12.13a"/>
<dbReference type="EnsemblMetazoa" id="T06C12.13a.1">
    <property type="protein sequence ID" value="T06C12.13a.1"/>
    <property type="gene ID" value="WBGene00011520"/>
</dbReference>
<dbReference type="GeneID" id="188172"/>
<dbReference type="KEGG" id="cel:CELE_T06C12.13"/>
<dbReference type="UCSC" id="T06C12.13">
    <property type="organism name" value="c. elegans"/>
</dbReference>
<dbReference type="AGR" id="WB:WBGene00011520"/>
<dbReference type="CTD" id="188172"/>
<dbReference type="WormBase" id="T06C12.13a">
    <property type="protein sequence ID" value="CE16363"/>
    <property type="gene ID" value="WBGene00011520"/>
    <property type="gene designation" value="nhr-213"/>
</dbReference>
<dbReference type="eggNOG" id="KOG3575">
    <property type="taxonomic scope" value="Eukaryota"/>
</dbReference>
<dbReference type="GeneTree" id="ENSGT00970000196028"/>
<dbReference type="InParanoid" id="O18048"/>
<dbReference type="OMA" id="ELHEHYT"/>
<dbReference type="OrthoDB" id="10018779at2759"/>
<dbReference type="PhylomeDB" id="O18048"/>
<dbReference type="PRO" id="PR:O18048"/>
<dbReference type="Proteomes" id="UP000001940">
    <property type="component" value="Chromosome V"/>
</dbReference>
<dbReference type="Bgee" id="WBGene00011520">
    <property type="expression patterns" value="Expressed in pharyngeal muscle cell (C elegans) and 3 other cell types or tissues"/>
</dbReference>
<dbReference type="ExpressionAtlas" id="O18048">
    <property type="expression patterns" value="baseline and differential"/>
</dbReference>
<dbReference type="GO" id="GO:0005634">
    <property type="term" value="C:nucleus"/>
    <property type="evidence" value="ECO:0007669"/>
    <property type="project" value="UniProtKB-SubCell"/>
</dbReference>
<dbReference type="GO" id="GO:0003700">
    <property type="term" value="F:DNA-binding transcription factor activity"/>
    <property type="evidence" value="ECO:0007669"/>
    <property type="project" value="InterPro"/>
</dbReference>
<dbReference type="GO" id="GO:0000978">
    <property type="term" value="F:RNA polymerase II cis-regulatory region sequence-specific DNA binding"/>
    <property type="evidence" value="ECO:0007669"/>
    <property type="project" value="InterPro"/>
</dbReference>
<dbReference type="GO" id="GO:0008270">
    <property type="term" value="F:zinc ion binding"/>
    <property type="evidence" value="ECO:0007669"/>
    <property type="project" value="UniProtKB-KW"/>
</dbReference>
<dbReference type="CDD" id="cd06960">
    <property type="entry name" value="NR_DBD_HNF4A"/>
    <property type="match status" value="1"/>
</dbReference>
<dbReference type="Gene3D" id="3.30.50.10">
    <property type="entry name" value="Erythroid Transcription Factor GATA-1, subunit A"/>
    <property type="match status" value="1"/>
</dbReference>
<dbReference type="Gene3D" id="1.10.565.10">
    <property type="entry name" value="Retinoid X Receptor"/>
    <property type="match status" value="1"/>
</dbReference>
<dbReference type="InterPro" id="IPR051152">
    <property type="entry name" value="C.elegans_Orphan_NR"/>
</dbReference>
<dbReference type="InterPro" id="IPR049636">
    <property type="entry name" value="HNF4-like_DBD"/>
</dbReference>
<dbReference type="InterPro" id="IPR035500">
    <property type="entry name" value="NHR-like_dom_sf"/>
</dbReference>
<dbReference type="InterPro" id="IPR000536">
    <property type="entry name" value="Nucl_hrmn_rcpt_lig-bd"/>
</dbReference>
<dbReference type="InterPro" id="IPR001628">
    <property type="entry name" value="Znf_hrmn_rcpt"/>
</dbReference>
<dbReference type="InterPro" id="IPR013088">
    <property type="entry name" value="Znf_NHR/GATA"/>
</dbReference>
<dbReference type="PANTHER" id="PTHR45680">
    <property type="entry name" value="NUCLEAR HORMONE RECEPTOR FAMILY"/>
    <property type="match status" value="1"/>
</dbReference>
<dbReference type="PANTHER" id="PTHR45680:SF17">
    <property type="entry name" value="NUCLEAR HORMONE RECEPTOR FAMILY-RELATED"/>
    <property type="match status" value="1"/>
</dbReference>
<dbReference type="Pfam" id="PF00104">
    <property type="entry name" value="Hormone_recep"/>
    <property type="match status" value="1"/>
</dbReference>
<dbReference type="Pfam" id="PF00105">
    <property type="entry name" value="zf-C4"/>
    <property type="match status" value="1"/>
</dbReference>
<dbReference type="PRINTS" id="PR00047">
    <property type="entry name" value="STROIDFINGER"/>
</dbReference>
<dbReference type="SMART" id="SM00430">
    <property type="entry name" value="HOLI"/>
    <property type="match status" value="1"/>
</dbReference>
<dbReference type="SMART" id="SM00399">
    <property type="entry name" value="ZnF_C4"/>
    <property type="match status" value="1"/>
</dbReference>
<dbReference type="SUPFAM" id="SSF57716">
    <property type="entry name" value="Glucocorticoid receptor-like (DNA-binding domain)"/>
    <property type="match status" value="1"/>
</dbReference>
<dbReference type="SUPFAM" id="SSF48508">
    <property type="entry name" value="Nuclear receptor ligand-binding domain"/>
    <property type="match status" value="1"/>
</dbReference>
<dbReference type="PROSITE" id="PS51843">
    <property type="entry name" value="NR_LBD"/>
    <property type="match status" value="1"/>
</dbReference>
<dbReference type="PROSITE" id="PS51030">
    <property type="entry name" value="NUCLEAR_REC_DBD_2"/>
    <property type="match status" value="1"/>
</dbReference>
<evidence type="ECO:0000255" key="1">
    <source>
        <dbReference type="PROSITE-ProRule" id="PRU00407"/>
    </source>
</evidence>
<evidence type="ECO:0000255" key="2">
    <source>
        <dbReference type="PROSITE-ProRule" id="PRU01189"/>
    </source>
</evidence>
<evidence type="ECO:0000305" key="3"/>
<organism>
    <name type="scientific">Caenorhabditis elegans</name>
    <dbReference type="NCBI Taxonomy" id="6239"/>
    <lineage>
        <taxon>Eukaryota</taxon>
        <taxon>Metazoa</taxon>
        <taxon>Ecdysozoa</taxon>
        <taxon>Nematoda</taxon>
        <taxon>Chromadorea</taxon>
        <taxon>Rhabditida</taxon>
        <taxon>Rhabditina</taxon>
        <taxon>Rhabditomorpha</taxon>
        <taxon>Rhabditoidea</taxon>
        <taxon>Rhabditidae</taxon>
        <taxon>Peloderinae</taxon>
        <taxon>Caenorhabditis</taxon>
    </lineage>
</organism>